<reference key="1">
    <citation type="journal article" date="2010" name="Mol. Phylogenet. Evol.">
        <title>Evolution of Conus peptide toxins: analysis of Conus californicus Reeve, 1844.</title>
        <authorList>
            <person name="Biggs J.S."/>
            <person name="Watkins M."/>
            <person name="Puillandre N."/>
            <person name="Ownby J.P."/>
            <person name="Lopez-Vera E."/>
            <person name="Christensen S."/>
            <person name="Moreno K.J."/>
            <person name="Bernaldez J."/>
            <person name="Licea-Navarro A."/>
            <person name="Corneli P.S."/>
            <person name="Olivera B.M."/>
        </authorList>
    </citation>
    <scope>NUCLEOTIDE SEQUENCE [GENOMIC DNA]</scope>
</reference>
<name>CU94_CONCL</name>
<dbReference type="EMBL" id="FJ959163">
    <property type="protein sequence ID" value="ADB93133.1"/>
    <property type="molecule type" value="Genomic_DNA"/>
</dbReference>
<dbReference type="ConoServer" id="4047">
    <property type="toxin name" value="Cal9.4 precursor"/>
</dbReference>
<dbReference type="GO" id="GO:0005576">
    <property type="term" value="C:extracellular region"/>
    <property type="evidence" value="ECO:0007669"/>
    <property type="project" value="UniProtKB-SubCell"/>
</dbReference>
<dbReference type="GO" id="GO:0090729">
    <property type="term" value="F:toxin activity"/>
    <property type="evidence" value="ECO:0007669"/>
    <property type="project" value="UniProtKB-KW"/>
</dbReference>
<feature type="signal peptide" evidence="2">
    <location>
        <begin position="1"/>
        <end position="23"/>
    </location>
</feature>
<feature type="propeptide" id="PRO_0000415043" evidence="1">
    <location>
        <begin position="24"/>
        <end position="37"/>
    </location>
</feature>
<feature type="peptide" id="PRO_0000415044" description="Conotoxin Cl9.4">
    <location>
        <begin position="39"/>
        <end position="79"/>
    </location>
</feature>
<feature type="disulfide bond" evidence="1">
    <location>
        <begin position="41"/>
        <end position="58"/>
    </location>
</feature>
<feature type="disulfide bond" evidence="1">
    <location>
        <begin position="46"/>
        <end position="68"/>
    </location>
</feature>
<feature type="disulfide bond" evidence="1">
    <location>
        <begin position="48"/>
        <end position="73"/>
    </location>
</feature>
<keyword id="KW-1015">Disulfide bond</keyword>
<keyword id="KW-0528">Neurotoxin</keyword>
<keyword id="KW-0964">Secreted</keyword>
<keyword id="KW-0732">Signal</keyword>
<keyword id="KW-0800">Toxin</keyword>
<evidence type="ECO:0000250" key="1"/>
<evidence type="ECO:0000255" key="2"/>
<proteinExistence type="inferred from homology"/>
<sequence length="79" mass="8433">MNCYLILTVALLLTSAMTGTTTAGQLNKKGVTLREDDRFPCNPGGCACRPLDSYSYTCQSPSSSTANCEGNECVSEADW</sequence>
<accession>D6C4M1</accession>
<protein>
    <recommendedName>
        <fullName>Conotoxin Cl9.4</fullName>
    </recommendedName>
</protein>
<organism>
    <name type="scientific">Californiconus californicus</name>
    <name type="common">California cone</name>
    <name type="synonym">Conus californicus</name>
    <dbReference type="NCBI Taxonomy" id="1736779"/>
    <lineage>
        <taxon>Eukaryota</taxon>
        <taxon>Metazoa</taxon>
        <taxon>Spiralia</taxon>
        <taxon>Lophotrochozoa</taxon>
        <taxon>Mollusca</taxon>
        <taxon>Gastropoda</taxon>
        <taxon>Caenogastropoda</taxon>
        <taxon>Neogastropoda</taxon>
        <taxon>Conoidea</taxon>
        <taxon>Conidae</taxon>
        <taxon>Californiconus</taxon>
    </lineage>
</organism>
<comment type="subcellular location">
    <subcellularLocation>
        <location evidence="1">Secreted</location>
    </subcellularLocation>
</comment>
<comment type="tissue specificity">
    <text>Expressed by the venom duct.</text>
</comment>
<comment type="domain">
    <text>The cysteine framework is IX (C-C-C-C-C-C).</text>
</comment>